<sequence length="503" mass="58203">MDLIPSFSLETWVLLALSLVLLYQYATYSHGFFKKLGIPGPKPLPLFGNVLSYRKGIWNFDIECHKKYGNMWGLYDGPRPVLSITEPDMIKAVLVKECYSVFTNRRSIFPAGFMKKALSISKDEEWKRIRTQLSQNFTSGKLKEMFPIIKQYGDVLVKNLRQEAEKGKPVQLKEIFGAYSMDIIIATAFGVNVDSLNNPHDPFVSKASKLFRFDFLSPFLLSVVIFPFLTQLYEMLNISIFPRDSLNFFTKFVKRTKENHLESNEKQRVNFLQMMLKSQNFKDTESHKALSDVEILAQSIFFIVAGYETTSSTLCFIMYSLATHPDVQKKLQQEIDKTLPNKAFPTYDVMMEMEYLDMVVNETLRLYPVTNRIERMSKKDFEINGMSFPKGTGVMIPSFALHRDSKYWPEPDEFRPERFSKKNKENIDPYIYMPFGNGPRNCIGMRMALMNLKLALIRLLQNFSFYTCKETQIPLRLGSQVILQPAKPIILKVVSRDETIRGA</sequence>
<comment type="function">
    <text>Cytochromes P450 are a group of heme-thiolate monooxygenases. In liver microsomes, this enzyme is involved in an NADPH-dependent electron transport pathway. It oxidizes a variety of structurally unrelated compounds, including steroids, fatty acids, and xenobiotics.</text>
</comment>
<comment type="catalytic activity">
    <reaction>
        <text>an organic molecule + reduced [NADPH--hemoprotein reductase] + O2 = an alcohol + oxidized [NADPH--hemoprotein reductase] + H2O + H(+)</text>
        <dbReference type="Rhea" id="RHEA:17149"/>
        <dbReference type="Rhea" id="RHEA-COMP:11964"/>
        <dbReference type="Rhea" id="RHEA-COMP:11965"/>
        <dbReference type="ChEBI" id="CHEBI:15377"/>
        <dbReference type="ChEBI" id="CHEBI:15378"/>
        <dbReference type="ChEBI" id="CHEBI:15379"/>
        <dbReference type="ChEBI" id="CHEBI:30879"/>
        <dbReference type="ChEBI" id="CHEBI:57618"/>
        <dbReference type="ChEBI" id="CHEBI:58210"/>
        <dbReference type="ChEBI" id="CHEBI:142491"/>
        <dbReference type="EC" id="1.14.14.1"/>
    </reaction>
</comment>
<comment type="cofactor">
    <cofactor evidence="1">
        <name>heme</name>
        <dbReference type="ChEBI" id="CHEBI:30413"/>
    </cofactor>
</comment>
<comment type="subcellular location">
    <subcellularLocation>
        <location>Endoplasmic reticulum membrane</location>
        <topology>Peripheral membrane protein</topology>
    </subcellularLocation>
    <subcellularLocation>
        <location>Microsome membrane</location>
        <topology>Peripheral membrane protein</topology>
    </subcellularLocation>
</comment>
<comment type="induction">
    <text>P450 can be induced to high levels in liver and other tissues by various foreign compounds, including drugs, pesticides, and carcinogens.</text>
</comment>
<comment type="similarity">
    <text evidence="2">Belongs to the cytochrome P450 family.</text>
</comment>
<gene>
    <name type="primary">CYP3A17</name>
</gene>
<feature type="chain" id="PRO_0000051800" description="Cytochrome P450 3A17">
    <location>
        <begin position="1"/>
        <end position="503"/>
    </location>
</feature>
<feature type="binding site" description="axial binding residue" evidence="1">
    <location>
        <position position="442"/>
    </location>
    <ligand>
        <name>heme</name>
        <dbReference type="ChEBI" id="CHEBI:30413"/>
    </ligand>
    <ligandPart>
        <name>Fe</name>
        <dbReference type="ChEBI" id="CHEBI:18248"/>
    </ligandPart>
</feature>
<proteinExistence type="evidence at transcript level"/>
<dbReference type="EC" id="1.14.14.1"/>
<dbReference type="EMBL" id="D28515">
    <property type="protein sequence ID" value="BAA05873.1"/>
    <property type="molecule type" value="mRNA"/>
</dbReference>
<dbReference type="RefSeq" id="NP_001166540.1">
    <property type="nucleotide sequence ID" value="NM_001173069.1"/>
</dbReference>
<dbReference type="SMR" id="Q64409"/>
<dbReference type="GeneID" id="100301487"/>
<dbReference type="KEGG" id="cpoc:100301487"/>
<dbReference type="CTD" id="100301487"/>
<dbReference type="eggNOG" id="KOG0158">
    <property type="taxonomic scope" value="Eukaryota"/>
</dbReference>
<dbReference type="InParanoid" id="Q64409"/>
<dbReference type="OrthoDB" id="1470350at2759"/>
<dbReference type="Proteomes" id="UP000005447">
    <property type="component" value="Unassembled WGS sequence"/>
</dbReference>
<dbReference type="GO" id="GO:0005789">
    <property type="term" value="C:endoplasmic reticulum membrane"/>
    <property type="evidence" value="ECO:0007669"/>
    <property type="project" value="UniProtKB-SubCell"/>
</dbReference>
<dbReference type="GO" id="GO:0020037">
    <property type="term" value="F:heme binding"/>
    <property type="evidence" value="ECO:0007669"/>
    <property type="project" value="InterPro"/>
</dbReference>
<dbReference type="GO" id="GO:0005506">
    <property type="term" value="F:iron ion binding"/>
    <property type="evidence" value="ECO:0007669"/>
    <property type="project" value="InterPro"/>
</dbReference>
<dbReference type="GO" id="GO:0016712">
    <property type="term" value="F:oxidoreductase activity, acting on paired donors, with incorporation or reduction of molecular oxygen, reduced flavin or flavoprotein as one donor, and incorporation of one atom of oxygen"/>
    <property type="evidence" value="ECO:0007669"/>
    <property type="project" value="UniProtKB-EC"/>
</dbReference>
<dbReference type="GO" id="GO:0050649">
    <property type="term" value="F:testosterone 6-beta-hydroxylase activity"/>
    <property type="evidence" value="ECO:0007669"/>
    <property type="project" value="TreeGrafter"/>
</dbReference>
<dbReference type="GO" id="GO:0070989">
    <property type="term" value="P:oxidative demethylation"/>
    <property type="evidence" value="ECO:0007669"/>
    <property type="project" value="TreeGrafter"/>
</dbReference>
<dbReference type="GO" id="GO:0008202">
    <property type="term" value="P:steroid metabolic process"/>
    <property type="evidence" value="ECO:0007669"/>
    <property type="project" value="TreeGrafter"/>
</dbReference>
<dbReference type="CDD" id="cd20650">
    <property type="entry name" value="CYP3A"/>
    <property type="match status" value="1"/>
</dbReference>
<dbReference type="FunFam" id="1.10.630.10:FF:000096">
    <property type="entry name" value="Cytochrome P450 3A4"/>
    <property type="match status" value="1"/>
</dbReference>
<dbReference type="Gene3D" id="1.10.630.10">
    <property type="entry name" value="Cytochrome P450"/>
    <property type="match status" value="1"/>
</dbReference>
<dbReference type="InterPro" id="IPR001128">
    <property type="entry name" value="Cyt_P450"/>
</dbReference>
<dbReference type="InterPro" id="IPR017972">
    <property type="entry name" value="Cyt_P450_CS"/>
</dbReference>
<dbReference type="InterPro" id="IPR008072">
    <property type="entry name" value="Cyt_P450_E_CYP3A"/>
</dbReference>
<dbReference type="InterPro" id="IPR002402">
    <property type="entry name" value="Cyt_P450_E_grp-II"/>
</dbReference>
<dbReference type="InterPro" id="IPR036396">
    <property type="entry name" value="Cyt_P450_sf"/>
</dbReference>
<dbReference type="InterPro" id="IPR050705">
    <property type="entry name" value="Cytochrome_P450_3A"/>
</dbReference>
<dbReference type="PANTHER" id="PTHR24302:SF38">
    <property type="entry name" value="CYTOCHROME P450 3A5"/>
    <property type="match status" value="1"/>
</dbReference>
<dbReference type="PANTHER" id="PTHR24302">
    <property type="entry name" value="CYTOCHROME P450 FAMILY 3"/>
    <property type="match status" value="1"/>
</dbReference>
<dbReference type="Pfam" id="PF00067">
    <property type="entry name" value="p450"/>
    <property type="match status" value="1"/>
</dbReference>
<dbReference type="PRINTS" id="PR00464">
    <property type="entry name" value="EP450II"/>
</dbReference>
<dbReference type="PRINTS" id="PR01689">
    <property type="entry name" value="EP450IICYP3A"/>
</dbReference>
<dbReference type="PRINTS" id="PR00385">
    <property type="entry name" value="P450"/>
</dbReference>
<dbReference type="SUPFAM" id="SSF48264">
    <property type="entry name" value="Cytochrome P450"/>
    <property type="match status" value="1"/>
</dbReference>
<dbReference type="PROSITE" id="PS00086">
    <property type="entry name" value="CYTOCHROME_P450"/>
    <property type="match status" value="1"/>
</dbReference>
<keyword id="KW-0256">Endoplasmic reticulum</keyword>
<keyword id="KW-0349">Heme</keyword>
<keyword id="KW-0408">Iron</keyword>
<keyword id="KW-0472">Membrane</keyword>
<keyword id="KW-0479">Metal-binding</keyword>
<keyword id="KW-0492">Microsome</keyword>
<keyword id="KW-0503">Monooxygenase</keyword>
<keyword id="KW-0560">Oxidoreductase</keyword>
<keyword id="KW-1185">Reference proteome</keyword>
<reference key="1">
    <citation type="journal article" date="1997" name="Arch. Biochem. Biophys.">
        <title>Regulation of CYP1A and CYP3A mRNAs by ascorbic acid in guinea pigs.</title>
        <authorList>
            <person name="Mori T."/>
            <person name="Itoh S."/>
            <person name="Ohgiya S."/>
            <person name="Ishizaki K."/>
            <person name="Kamataki T."/>
        </authorList>
    </citation>
    <scope>NUCLEOTIDE SEQUENCE [MRNA]</scope>
    <source>
        <strain>Hartley</strain>
        <tissue>Liver</tissue>
    </source>
</reference>
<organism>
    <name type="scientific">Cavia porcellus</name>
    <name type="common">Guinea pig</name>
    <dbReference type="NCBI Taxonomy" id="10141"/>
    <lineage>
        <taxon>Eukaryota</taxon>
        <taxon>Metazoa</taxon>
        <taxon>Chordata</taxon>
        <taxon>Craniata</taxon>
        <taxon>Vertebrata</taxon>
        <taxon>Euteleostomi</taxon>
        <taxon>Mammalia</taxon>
        <taxon>Eutheria</taxon>
        <taxon>Euarchontoglires</taxon>
        <taxon>Glires</taxon>
        <taxon>Rodentia</taxon>
        <taxon>Hystricomorpha</taxon>
        <taxon>Caviidae</taxon>
        <taxon>Cavia</taxon>
    </lineage>
</organism>
<accession>Q64409</accession>
<evidence type="ECO:0000250" key="1"/>
<evidence type="ECO:0000305" key="2"/>
<protein>
    <recommendedName>
        <fullName>Cytochrome P450 3A17</fullName>
        <ecNumber>1.14.14.1</ecNumber>
    </recommendedName>
    <alternativeName>
        <fullName>CYPIIIA17</fullName>
    </alternativeName>
</protein>
<name>CP3AH_CAVPO</name>